<comment type="function">
    <text evidence="1">Catalyzes the synthesis of beta-nicotinate D-ribonucleotide from nicotinate and 5-phospho-D-ribose 1-phosphate at the expense of ATP.</text>
</comment>
<comment type="catalytic activity">
    <reaction evidence="1">
        <text>nicotinate + 5-phospho-alpha-D-ribose 1-diphosphate + ATP + H2O = nicotinate beta-D-ribonucleotide + ADP + phosphate + diphosphate</text>
        <dbReference type="Rhea" id="RHEA:36163"/>
        <dbReference type="ChEBI" id="CHEBI:15377"/>
        <dbReference type="ChEBI" id="CHEBI:30616"/>
        <dbReference type="ChEBI" id="CHEBI:32544"/>
        <dbReference type="ChEBI" id="CHEBI:33019"/>
        <dbReference type="ChEBI" id="CHEBI:43474"/>
        <dbReference type="ChEBI" id="CHEBI:57502"/>
        <dbReference type="ChEBI" id="CHEBI:58017"/>
        <dbReference type="ChEBI" id="CHEBI:456216"/>
        <dbReference type="EC" id="6.3.4.21"/>
    </reaction>
</comment>
<comment type="pathway">
    <text evidence="1">Cofactor biosynthesis; NAD(+) biosynthesis; nicotinate D-ribonucleotide from nicotinate: step 1/1.</text>
</comment>
<comment type="PTM">
    <text evidence="1">Transiently phosphorylated on a His residue during the reaction cycle. Phosphorylation strongly increases the affinity for substrates and increases the rate of nicotinate D-ribonucleotide production. Dephosphorylation regenerates the low-affinity form of the enzyme, leading to product release.</text>
</comment>
<comment type="similarity">
    <text evidence="1">Belongs to the NAPRTase family.</text>
</comment>
<protein>
    <recommendedName>
        <fullName evidence="1">Nicotinate phosphoribosyltransferase</fullName>
        <shortName evidence="1">NAPRTase</shortName>
        <ecNumber evidence="1">6.3.4.21</ecNumber>
    </recommendedName>
</protein>
<sequence>MAKTDLARRVYNHTWKLDPIIRSLLDTDFYKLLMLQMIWGLYPRVDATFSLINRTSSVRLADEIDEGELRAQLDHARTLRFSKKEMIWLAGNTFYGRKQIFQPEFLAWLHDFQLPEYELRRKDGQYELHFHGPWTHTTMWEIPALAIINELRSRAAMKNLGPFSLDVLYARAKAKMWSKVERLRQLPDLKISDFGTRRRHSFLWQRWCVEALKEGIGSAFTGTSNVLLAMDTDLEALGTNAHELPMVLAALAKTDDELRSAPYRVLQDWNRYYGGNLLIVLPDAFGTAAFLRNAPDWVADWTGFRPDSAPPIEGGERIIEWWKSKGKDPREKLLIFSDALDVDTIEETYRHFEGRVRMGFGWGTNLTNDFAGCAPQSIDGLKAISLVCKVTDANGHPAVKLSDNPQKATGDPKEVARYLRFFGNEERVEQLVRV</sequence>
<proteinExistence type="inferred from homology"/>
<reference key="1">
    <citation type="journal article" date="2005" name="Infect. Immun.">
        <title>Whole-genome analyses of speciation events in pathogenic Brucellae.</title>
        <authorList>
            <person name="Chain P.S."/>
            <person name="Comerci D.J."/>
            <person name="Tolmasky M.E."/>
            <person name="Larimer F.W."/>
            <person name="Malfatti S.A."/>
            <person name="Vergez L.M."/>
            <person name="Aguero F."/>
            <person name="Land M.L."/>
            <person name="Ugalde R.A."/>
            <person name="Garcia E."/>
        </authorList>
    </citation>
    <scope>NUCLEOTIDE SEQUENCE [LARGE SCALE GENOMIC DNA]</scope>
    <source>
        <strain>2308</strain>
    </source>
</reference>
<keyword id="KW-0436">Ligase</keyword>
<keyword id="KW-0597">Phosphoprotein</keyword>
<keyword id="KW-0662">Pyridine nucleotide biosynthesis</keyword>
<keyword id="KW-1185">Reference proteome</keyword>
<evidence type="ECO:0000255" key="1">
    <source>
        <dbReference type="HAMAP-Rule" id="MF_00570"/>
    </source>
</evidence>
<organism>
    <name type="scientific">Brucella abortus (strain 2308)</name>
    <dbReference type="NCBI Taxonomy" id="359391"/>
    <lineage>
        <taxon>Bacteria</taxon>
        <taxon>Pseudomonadati</taxon>
        <taxon>Pseudomonadota</taxon>
        <taxon>Alphaproteobacteria</taxon>
        <taxon>Hyphomicrobiales</taxon>
        <taxon>Brucellaceae</taxon>
        <taxon>Brucella/Ochrobactrum group</taxon>
        <taxon>Brucella</taxon>
    </lineage>
</organism>
<dbReference type="EC" id="6.3.4.21" evidence="1"/>
<dbReference type="EMBL" id="AM040264">
    <property type="protein sequence ID" value="CAJ10065.1"/>
    <property type="molecule type" value="Genomic_DNA"/>
</dbReference>
<dbReference type="RefSeq" id="WP_002965361.1">
    <property type="nucleotide sequence ID" value="NZ_KN046823.1"/>
</dbReference>
<dbReference type="SMR" id="Q2YNV6"/>
<dbReference type="STRING" id="359391.BAB1_0109"/>
<dbReference type="GeneID" id="97534468"/>
<dbReference type="KEGG" id="bmf:BAB1_0109"/>
<dbReference type="PATRIC" id="fig|359391.11.peg.1536"/>
<dbReference type="HOGENOM" id="CLU_030991_1_0_5"/>
<dbReference type="UniPathway" id="UPA00253">
    <property type="reaction ID" value="UER00457"/>
</dbReference>
<dbReference type="Proteomes" id="UP000002719">
    <property type="component" value="Chromosome I"/>
</dbReference>
<dbReference type="GO" id="GO:0005829">
    <property type="term" value="C:cytosol"/>
    <property type="evidence" value="ECO:0007669"/>
    <property type="project" value="TreeGrafter"/>
</dbReference>
<dbReference type="GO" id="GO:0004516">
    <property type="term" value="F:nicotinate phosphoribosyltransferase activity"/>
    <property type="evidence" value="ECO:0007669"/>
    <property type="project" value="UniProtKB-UniRule"/>
</dbReference>
<dbReference type="GO" id="GO:0034355">
    <property type="term" value="P:NAD biosynthetic process via the salvage pathway"/>
    <property type="evidence" value="ECO:0007669"/>
    <property type="project" value="TreeGrafter"/>
</dbReference>
<dbReference type="Gene3D" id="3.20.140.10">
    <property type="entry name" value="nicotinate phosphoribosyltransferase"/>
    <property type="match status" value="1"/>
</dbReference>
<dbReference type="HAMAP" id="MF_00570">
    <property type="entry name" value="NAPRTase"/>
    <property type="match status" value="1"/>
</dbReference>
<dbReference type="InterPro" id="IPR041525">
    <property type="entry name" value="N/Namide_PRibTrfase"/>
</dbReference>
<dbReference type="InterPro" id="IPR040727">
    <property type="entry name" value="NAPRTase_N"/>
</dbReference>
<dbReference type="InterPro" id="IPR006406">
    <property type="entry name" value="Nic_PRibTrfase"/>
</dbReference>
<dbReference type="InterPro" id="IPR007229">
    <property type="entry name" value="Nic_PRibTrfase-Fam"/>
</dbReference>
<dbReference type="InterPro" id="IPR036068">
    <property type="entry name" value="Nicotinate_pribotase-like_C"/>
</dbReference>
<dbReference type="NCBIfam" id="TIGR01514">
    <property type="entry name" value="NAPRTase"/>
    <property type="match status" value="1"/>
</dbReference>
<dbReference type="NCBIfam" id="NF003704">
    <property type="entry name" value="PRK05321.1"/>
    <property type="match status" value="1"/>
</dbReference>
<dbReference type="PANTHER" id="PTHR11098">
    <property type="entry name" value="NICOTINATE PHOSPHORIBOSYLTRANSFERASE"/>
    <property type="match status" value="1"/>
</dbReference>
<dbReference type="PANTHER" id="PTHR11098:SF1">
    <property type="entry name" value="NICOTINATE PHOSPHORIBOSYLTRANSFERASE"/>
    <property type="match status" value="1"/>
</dbReference>
<dbReference type="Pfam" id="PF04095">
    <property type="entry name" value="NAPRTase"/>
    <property type="match status" value="1"/>
</dbReference>
<dbReference type="Pfam" id="PF17767">
    <property type="entry name" value="NAPRTase_N"/>
    <property type="match status" value="1"/>
</dbReference>
<dbReference type="PIRSF" id="PIRSF000484">
    <property type="entry name" value="NAPRT"/>
    <property type="match status" value="1"/>
</dbReference>
<dbReference type="SUPFAM" id="SSF51690">
    <property type="entry name" value="Nicotinate/Quinolinate PRTase C-terminal domain-like"/>
    <property type="match status" value="1"/>
</dbReference>
<dbReference type="SUPFAM" id="SSF54675">
    <property type="entry name" value="Nicotinate/Quinolinate PRTase N-terminal domain-like"/>
    <property type="match status" value="1"/>
</dbReference>
<accession>Q2YNV6</accession>
<gene>
    <name evidence="1" type="primary">pncB</name>
    <name type="ordered locus">BAB1_0109</name>
</gene>
<name>PNCB_BRUA2</name>
<feature type="chain" id="PRO_1000024995" description="Nicotinate phosphoribosyltransferase">
    <location>
        <begin position="1"/>
        <end position="434"/>
    </location>
</feature>
<feature type="modified residue" description="Phosphohistidine; by autocatalysis" evidence="1">
    <location>
        <position position="242"/>
    </location>
</feature>